<sequence length="897" mass="104856">MRSKHLVTLFIITFLSFSTVKVWGKDVFAGFVTKKLKTLLDCNFALYYNFKGNGPDAGSFLDFVDEPEQFYWFVEHFLSVKFRVPKHLKDKNIHNFTPCLNRSWVSEFLKEYEEPFVNPVMKFLDKEQRLFFTYNFGDVEPQGKYTYFPVKEFHKYCILPPLIKTNIKDGESGEFLKYQLNKEEYKVFLSSVGSQMTAIKNLYSTVEDEQRKQLLKVIIENESTNDISVQCPTYNIKLHYTKECANSNNILKCIDEFLRKTCEKKTESKHPSADLCEHLQFLFESLKNPYLDNFKKFMTNSDFTLIKPQSVWNVPIFDIYKPKNYLDSVQNLDTECFKKLNSKNLIFLSFHDDIPNNPYYNVELQEIVKLSTYTYSIFDKLYNFFFVFKKSGAPISPVSVKELSHNITDFSFKEDNSEIQCQNVRKSLDLEVDVETMKGIAAEKLCKIIEKFILTKDDASKPEKSDIHRGFRILCILISTHVEAYNIVRQLLNMESMISLTRYTSLYIHKFFKSVTLLKGNFLYKNNKAIRYSRACSKASLHVPSVLYRRNIYIPETFLSLYLGLSNLVSSNPSSPFFEYAIIEFLVTYYNKGSEKFVLYFISIISVLYINEYYYEQLSCFYPKEFELIKSRMIHPNIVDRILKGIDNLMKSTRYDKMRTMYLDFESSDIFSREKVFTALYNFDSFIKTNEQLKKKNLEEISEIPVQLETSNDGIGYRKQDVLYETDKPQTMDEASYEETVDEDAHHVNEKQHSAHFLDAIAEKDILEEKTKDQDLEIELYKYMGPLKEQSKSTSAASTSDEISGSEGPSTESTSTGNQGEDKTTDNTYKEMEELEEAEGTSNLKKGLEFYKSSLKLDQLDKEKPKKKKSKRKKKRDSSSDRILLEESKTFTSENEL</sequence>
<dbReference type="EMBL" id="KE123803">
    <property type="protein sequence ID" value="EWC88773.1"/>
    <property type="molecule type" value="Genomic_DNA"/>
</dbReference>
<dbReference type="EMBL" id="QFXU01000008">
    <property type="protein sequence ID" value="KAF4330662.1"/>
    <property type="molecule type" value="Genomic_DNA"/>
</dbReference>
<dbReference type="EMBL" id="NYMT01000014">
    <property type="protein sequence ID" value="PKC44979.1"/>
    <property type="molecule type" value="Genomic_DNA"/>
</dbReference>
<dbReference type="PDB" id="7MRW">
    <property type="method" value="EM"/>
    <property type="resolution" value="3.72 A"/>
    <property type="chains" value="C=1-897"/>
</dbReference>
<dbReference type="PDBsum" id="7MRW"/>
<dbReference type="EMDB" id="EMD-23959"/>
<dbReference type="SMR" id="W7JUX6"/>
<dbReference type="EnsemblProtists" id="EWC88773">
    <property type="protein sequence ID" value="EWC88773"/>
    <property type="gene ID" value="PFNF54_02468"/>
</dbReference>
<dbReference type="OMA" id="GEPEQFY"/>
<dbReference type="Proteomes" id="UP000030673">
    <property type="component" value="Unassembled WGS sequence"/>
</dbReference>
<dbReference type="Proteomes" id="UP000232684">
    <property type="component" value="Unassembled WGS sequence"/>
</dbReference>
<dbReference type="Proteomes" id="UP000754359">
    <property type="component" value="Unassembled WGS sequence"/>
</dbReference>
<dbReference type="GO" id="GO:0031410">
    <property type="term" value="C:cytoplasmic vesicle"/>
    <property type="evidence" value="ECO:0007669"/>
    <property type="project" value="UniProtKB-KW"/>
</dbReference>
<dbReference type="GO" id="GO:0020002">
    <property type="term" value="C:host cell plasma membrane"/>
    <property type="evidence" value="ECO:0007669"/>
    <property type="project" value="UniProtKB-SubCell"/>
</dbReference>
<dbReference type="GO" id="GO:0016020">
    <property type="term" value="C:membrane"/>
    <property type="evidence" value="ECO:0007669"/>
    <property type="project" value="UniProtKB-KW"/>
</dbReference>
<dbReference type="GO" id="GO:0020008">
    <property type="term" value="C:rhoptry"/>
    <property type="evidence" value="ECO:0007669"/>
    <property type="project" value="UniProtKB-SubCell"/>
</dbReference>
<dbReference type="GO" id="GO:0020005">
    <property type="term" value="C:symbiont-containing vacuole membrane"/>
    <property type="evidence" value="ECO:0007669"/>
    <property type="project" value="UniProtKB-SubCell"/>
</dbReference>
<dbReference type="InterPro" id="IPR054451">
    <property type="entry name" value="RhopH3_C"/>
</dbReference>
<dbReference type="Pfam" id="PF22808">
    <property type="entry name" value="RhopH3_C"/>
    <property type="match status" value="1"/>
</dbReference>
<evidence type="ECO:0000250" key="1">
    <source>
        <dbReference type="UniProtKB" id="B0M0W2"/>
    </source>
</evidence>
<evidence type="ECO:0000250" key="2">
    <source>
        <dbReference type="UniProtKB" id="Q8I395"/>
    </source>
</evidence>
<evidence type="ECO:0000255" key="3"/>
<evidence type="ECO:0000256" key="4">
    <source>
        <dbReference type="SAM" id="MobiDB-lite"/>
    </source>
</evidence>
<evidence type="ECO:0000269" key="5">
    <source>
    </source>
</evidence>
<evidence type="ECO:0000303" key="6">
    <source>
    </source>
</evidence>
<evidence type="ECO:0000305" key="7"/>
<evidence type="ECO:0000312" key="8">
    <source>
        <dbReference type="EMBL" id="EWC88773.1"/>
    </source>
</evidence>
<evidence type="ECO:0000312" key="9">
    <source>
        <dbReference type="EMBL" id="KAF4330662.1"/>
    </source>
</evidence>
<evidence type="ECO:0000312" key="10">
    <source>
        <dbReference type="EMBL" id="PKC44979.1"/>
    </source>
</evidence>
<evidence type="ECO:0000312" key="11">
    <source>
        <dbReference type="Proteomes" id="UP000030673"/>
    </source>
</evidence>
<evidence type="ECO:0000312" key="12">
    <source>
        <dbReference type="Proteomes" id="UP000232684"/>
    </source>
</evidence>
<evidence type="ECO:0000312" key="13">
    <source>
        <dbReference type="Proteomes" id="UP000754359"/>
    </source>
</evidence>
<evidence type="ECO:0007744" key="14">
    <source>
        <dbReference type="PDB" id="7MRW"/>
    </source>
</evidence>
<name>RCH3_PLAFO</name>
<keyword id="KW-0002">3D-structure</keyword>
<keyword id="KW-0968">Cytoplasmic vesicle</keyword>
<keyword id="KW-1015">Disulfide bond</keyword>
<keyword id="KW-1032">Host cell membrane</keyword>
<keyword id="KW-1043">Host membrane</keyword>
<keyword id="KW-0472">Membrane</keyword>
<keyword id="KW-0597">Phosphoprotein</keyword>
<keyword id="KW-1185">Reference proteome</keyword>
<keyword id="KW-0732">Signal</keyword>
<keyword id="KW-0812">Transmembrane</keyword>
<keyword id="KW-1133">Transmembrane helix</keyword>
<keyword id="KW-0813">Transport</keyword>
<organism evidence="11">
    <name type="scientific">Plasmodium falciparum (isolate NF54)</name>
    <dbReference type="NCBI Taxonomy" id="5843"/>
    <lineage>
        <taxon>Eukaryota</taxon>
        <taxon>Sar</taxon>
        <taxon>Alveolata</taxon>
        <taxon>Apicomplexa</taxon>
        <taxon>Aconoidasida</taxon>
        <taxon>Haemosporida</taxon>
        <taxon>Plasmodiidae</taxon>
        <taxon>Plasmodium</taxon>
        <taxon>Plasmodium (Laverania)</taxon>
    </lineage>
</organism>
<comment type="function">
    <text evidence="1 2">Participates in the formation of new permeability pathways in Plasmodium-infected erythrocytes enabling the uptake of nutrients from the blood plasma (By similarity). Required for maintaining invasion capacity of merozoites (By similarity). Required for the trophozoite to schizont developmental transition of the intracellular parasite (By similarity).</text>
</comment>
<comment type="subunit">
    <text evidence="2 5">Component of the RhopH complex, composed of CLAG3.1/CLAG3.2, RhopH2 and RhopH3 with a 1:1:1 subunit stoichiometry (PubMed:34446549). Interacts with CLAG3.1/CLAG3.2 (PubMed:34446549). Interacts with CDPK1; the interaction promotes RhopH3 phosphorylation in merozoites (By similarity).</text>
</comment>
<comment type="subcellular location">
    <subcellularLocation>
        <location evidence="1">Host cell membrane</location>
        <topology evidence="3">Single-pass membrane protein</topology>
    </subcellularLocation>
    <subcellularLocation>
        <location evidence="1">Host cell membrane</location>
        <topology evidence="1">Peripheral membrane protein</topology>
    </subcellularLocation>
    <subcellularLocation>
        <location evidence="1">Parasitophorous vacuole membrane</location>
        <topology evidence="3">Single-pass membrane protein</topology>
    </subcellularLocation>
    <subcellularLocation>
        <location evidence="1">Cytoplasmic vesicle</location>
        <location evidence="1">Secretory vesicle</location>
        <location evidence="1">Rhoptry</location>
    </subcellularLocation>
    <text evidence="1">Export to host cytosol is mediated by the Plasmodium translocon of exported proteins (PTEX) complex.</text>
</comment>
<comment type="PTM">
    <text evidence="1">Proteolytically cleaved near C-terminus.</text>
</comment>
<gene>
    <name evidence="6" type="primary">RhopH3</name>
    <name evidence="10" type="ORF">CK202_3967</name>
    <name evidence="9" type="ORF">CYL21_1038</name>
    <name evidence="8" type="ORF">PFNF54_02468</name>
</gene>
<feature type="signal peptide" evidence="3">
    <location>
        <begin position="1"/>
        <end position="24"/>
    </location>
</feature>
<feature type="chain" id="PRO_5014109674" description="High molecular weight rhoptry protein 3" evidence="3">
    <location>
        <begin position="25"/>
        <end position="897"/>
    </location>
</feature>
<feature type="transmembrane region" description="Helical" evidence="3">
    <location>
        <begin position="597"/>
        <end position="615"/>
    </location>
</feature>
<feature type="region of interest" description="Disordered" evidence="4">
    <location>
        <begin position="788"/>
        <end position="845"/>
    </location>
</feature>
<feature type="region of interest" description="Disordered" evidence="4">
    <location>
        <begin position="859"/>
        <end position="897"/>
    </location>
</feature>
<feature type="compositionally biased region" description="Polar residues" evidence="4">
    <location>
        <begin position="792"/>
        <end position="801"/>
    </location>
</feature>
<feature type="compositionally biased region" description="Low complexity" evidence="4">
    <location>
        <begin position="802"/>
        <end position="817"/>
    </location>
</feature>
<feature type="compositionally biased region" description="Basic and acidic residues" evidence="4">
    <location>
        <begin position="820"/>
        <end position="832"/>
    </location>
</feature>
<feature type="compositionally biased region" description="Basic residues" evidence="4">
    <location>
        <begin position="865"/>
        <end position="876"/>
    </location>
</feature>
<feature type="compositionally biased region" description="Basic and acidic residues" evidence="4">
    <location>
        <begin position="877"/>
        <end position="889"/>
    </location>
</feature>
<feature type="modified residue" description="Phosphoserine" evidence="2">
    <location>
        <position position="804"/>
    </location>
</feature>
<feature type="disulfide bond" evidence="5 14">
    <location>
        <begin position="157"/>
        <end position="231"/>
    </location>
</feature>
<feature type="disulfide bond" evidence="5 14">
    <location>
        <begin position="244"/>
        <end position="253"/>
    </location>
</feature>
<feature type="disulfide bond" evidence="5 14">
    <location>
        <begin position="262"/>
        <end position="276"/>
    </location>
</feature>
<feature type="disulfide bond" evidence="5 14">
    <location>
        <begin position="421"/>
        <end position="620"/>
    </location>
</feature>
<feature type="disulfide bond" evidence="5 14">
    <location>
        <begin position="475"/>
        <end position="536"/>
    </location>
</feature>
<reference evidence="11" key="1">
    <citation type="submission" date="2013-02" db="EMBL/GenBank/DDBJ databases">
        <title>The Genome Sequence of Plasmodium falciparum NF54.</title>
        <authorList>
            <consortium name="The Broad Institute Genome Sequencing Platform"/>
            <consortium name="The Broad Institute Genome Sequencing Center for Infectious Disease"/>
            <person name="Neafsey D."/>
            <person name="Cheeseman I."/>
            <person name="Volkman S."/>
            <person name="Adams J."/>
            <person name="Walker B."/>
            <person name="Young S.K."/>
            <person name="Zeng Q."/>
            <person name="Gargeya S."/>
            <person name="Fitzgerald M."/>
            <person name="Haas B."/>
            <person name="Abouelleil A."/>
            <person name="Alvarado L."/>
            <person name="Arachchi H.M."/>
            <person name="Berlin A.M."/>
            <person name="Chapman S.B."/>
            <person name="Dewar J."/>
            <person name="Goldberg J."/>
            <person name="Griggs A."/>
            <person name="Gujja S."/>
            <person name="Hansen M."/>
            <person name="Howarth C."/>
            <person name="Imamovic A."/>
            <person name="Larimer J."/>
            <person name="McCowan C."/>
            <person name="Murphy C."/>
            <person name="Neiman D."/>
            <person name="Pearson M."/>
            <person name="Priest M."/>
            <person name="Roberts A."/>
            <person name="Saif S."/>
            <person name="Shea T."/>
            <person name="Sisk P."/>
            <person name="Sykes S."/>
            <person name="Wortman J."/>
            <person name="Nusbaum C."/>
            <person name="Birren B."/>
        </authorList>
    </citation>
    <scope>NUCLEOTIDE SEQUENCE [LARGE SCALE GENOMIC DNA]</scope>
    <source>
        <strain evidence="11">NF54</strain>
    </source>
</reference>
<reference evidence="12" key="2">
    <citation type="submission" date="2017-11" db="EMBL/GenBank/DDBJ databases">
        <title>Plasmodium falciparum NF54 genome assembly.</title>
        <authorList>
            <person name="Bryant J.M."/>
            <person name="Baumgarten S."/>
            <person name="Scheidig-Benatar C."/>
            <person name="Scherf A."/>
        </authorList>
    </citation>
    <scope>NUCLEOTIDE SEQUENCE [LARGE SCALE GENOMIC DNA]</scope>
    <source>
        <strain evidence="10">NF54</strain>
    </source>
</reference>
<reference evidence="13" key="3">
    <citation type="submission" date="2018-05" db="EMBL/GenBank/DDBJ databases">
        <title>Genome assembly of Plasmodium falciparum NF54 DiCre.</title>
        <authorList>
            <person name="Baumgarten S."/>
            <person name="Treeck M."/>
            <person name="Scherf A."/>
        </authorList>
    </citation>
    <scope>NUCLEOTIDE SEQUENCE [LARGE SCALE GENOMIC DNA]</scope>
    <source>
        <strain evidence="9">NF54</strain>
    </source>
</reference>
<reference evidence="14" key="4">
    <citation type="journal article" date="2021" name="Proc. Natl. Acad. Sci. U.S.A.">
        <title>Native structure of the RhopH complex, a key determinant of malaria parasite nutrient acquisition.</title>
        <authorList>
            <person name="Ho C.M."/>
            <person name="Jih J."/>
            <person name="Lai M."/>
            <person name="Li X."/>
            <person name="Goldberg D.E."/>
            <person name="Beck J.R."/>
            <person name="Zhou Z.H."/>
        </authorList>
    </citation>
    <scope>STRUCTURE BY ELECTRON MICROSCOPY (3.72 ANGSTROMS) IN RHOPH COMPLEX</scope>
    <scope>MASS SPECTROMETRY</scope>
    <scope>IDENTIFICATION IN RHOPH COMPLEX</scope>
    <scope>DISULFIDE BONDS</scope>
    <source>
        <strain evidence="6">NF54</strain>
    </source>
</reference>
<protein>
    <recommendedName>
        <fullName evidence="7">High molecular weight rhoptry protein 3</fullName>
    </recommendedName>
</protein>
<proteinExistence type="evidence at protein level"/>
<accession>W7JUX6</accession>